<sequence length="197" mass="22554">MLLGGKDKKGSLFIVSAPAGTGKTTLVNLLVQEFPTVIASISYTTRAPRLGEVNGKDYYFITESEFEAKIAAADFLEYVKLYDTYYGTSREWVEIQRQLGLHVILVIDTQGALQLQKLCEATFIFIRPPSLDELKNRLINRQTESLEMIEKRLACAERELEAAQYYDYEIINDDLQEAYQVLRSILIAEYHRISKKL</sequence>
<protein>
    <recommendedName>
        <fullName evidence="1">Guanylate kinase</fullName>
        <ecNumber evidence="1">2.7.4.8</ecNumber>
    </recommendedName>
    <alternativeName>
        <fullName evidence="1">GMP kinase</fullName>
    </alternativeName>
</protein>
<dbReference type="EC" id="2.7.4.8" evidence="1"/>
<dbReference type="EMBL" id="BX908798">
    <property type="protein sequence ID" value="CAF23386.1"/>
    <property type="molecule type" value="Genomic_DNA"/>
</dbReference>
<dbReference type="RefSeq" id="WP_011175212.1">
    <property type="nucleotide sequence ID" value="NC_005861.2"/>
</dbReference>
<dbReference type="SMR" id="Q6MDG3"/>
<dbReference type="STRING" id="264201.pc0662"/>
<dbReference type="KEGG" id="pcu:PC_RS03175"/>
<dbReference type="eggNOG" id="COG0194">
    <property type="taxonomic scope" value="Bacteria"/>
</dbReference>
<dbReference type="HOGENOM" id="CLU_001715_1_0_0"/>
<dbReference type="OrthoDB" id="9808150at2"/>
<dbReference type="Proteomes" id="UP000000529">
    <property type="component" value="Chromosome"/>
</dbReference>
<dbReference type="GO" id="GO:0005829">
    <property type="term" value="C:cytosol"/>
    <property type="evidence" value="ECO:0007669"/>
    <property type="project" value="TreeGrafter"/>
</dbReference>
<dbReference type="GO" id="GO:0005524">
    <property type="term" value="F:ATP binding"/>
    <property type="evidence" value="ECO:0007669"/>
    <property type="project" value="UniProtKB-UniRule"/>
</dbReference>
<dbReference type="GO" id="GO:0004385">
    <property type="term" value="F:guanylate kinase activity"/>
    <property type="evidence" value="ECO:0007669"/>
    <property type="project" value="UniProtKB-UniRule"/>
</dbReference>
<dbReference type="CDD" id="cd00071">
    <property type="entry name" value="GMPK"/>
    <property type="match status" value="1"/>
</dbReference>
<dbReference type="FunFam" id="3.30.63.10:FF:000005">
    <property type="entry name" value="Guanylate kinase"/>
    <property type="match status" value="1"/>
</dbReference>
<dbReference type="Gene3D" id="3.30.63.10">
    <property type="entry name" value="Guanylate Kinase phosphate binding domain"/>
    <property type="match status" value="1"/>
</dbReference>
<dbReference type="Gene3D" id="3.40.50.300">
    <property type="entry name" value="P-loop containing nucleotide triphosphate hydrolases"/>
    <property type="match status" value="1"/>
</dbReference>
<dbReference type="HAMAP" id="MF_00328">
    <property type="entry name" value="Guanylate_kinase"/>
    <property type="match status" value="1"/>
</dbReference>
<dbReference type="InterPro" id="IPR008145">
    <property type="entry name" value="GK/Ca_channel_bsu"/>
</dbReference>
<dbReference type="InterPro" id="IPR008144">
    <property type="entry name" value="Guanylate_kin-like_dom"/>
</dbReference>
<dbReference type="InterPro" id="IPR017665">
    <property type="entry name" value="Guanylate_kinase"/>
</dbReference>
<dbReference type="InterPro" id="IPR020590">
    <property type="entry name" value="Guanylate_kinase_CS"/>
</dbReference>
<dbReference type="InterPro" id="IPR027417">
    <property type="entry name" value="P-loop_NTPase"/>
</dbReference>
<dbReference type="NCBIfam" id="TIGR03263">
    <property type="entry name" value="guanyl_kin"/>
    <property type="match status" value="1"/>
</dbReference>
<dbReference type="PANTHER" id="PTHR23117:SF13">
    <property type="entry name" value="GUANYLATE KINASE"/>
    <property type="match status" value="1"/>
</dbReference>
<dbReference type="PANTHER" id="PTHR23117">
    <property type="entry name" value="GUANYLATE KINASE-RELATED"/>
    <property type="match status" value="1"/>
</dbReference>
<dbReference type="Pfam" id="PF00625">
    <property type="entry name" value="Guanylate_kin"/>
    <property type="match status" value="1"/>
</dbReference>
<dbReference type="SMART" id="SM00072">
    <property type="entry name" value="GuKc"/>
    <property type="match status" value="1"/>
</dbReference>
<dbReference type="SUPFAM" id="SSF52540">
    <property type="entry name" value="P-loop containing nucleoside triphosphate hydrolases"/>
    <property type="match status" value="1"/>
</dbReference>
<dbReference type="PROSITE" id="PS00856">
    <property type="entry name" value="GUANYLATE_KINASE_1"/>
    <property type="match status" value="1"/>
</dbReference>
<dbReference type="PROSITE" id="PS50052">
    <property type="entry name" value="GUANYLATE_KINASE_2"/>
    <property type="match status" value="1"/>
</dbReference>
<organism>
    <name type="scientific">Protochlamydia amoebophila (strain UWE25)</name>
    <dbReference type="NCBI Taxonomy" id="264201"/>
    <lineage>
        <taxon>Bacteria</taxon>
        <taxon>Pseudomonadati</taxon>
        <taxon>Chlamydiota</taxon>
        <taxon>Chlamydiia</taxon>
        <taxon>Parachlamydiales</taxon>
        <taxon>Parachlamydiaceae</taxon>
        <taxon>Candidatus Protochlamydia</taxon>
    </lineage>
</organism>
<gene>
    <name evidence="1" type="primary">gmk</name>
    <name type="ordered locus">pc0662</name>
</gene>
<keyword id="KW-0067">ATP-binding</keyword>
<keyword id="KW-0963">Cytoplasm</keyword>
<keyword id="KW-0418">Kinase</keyword>
<keyword id="KW-0547">Nucleotide-binding</keyword>
<keyword id="KW-1185">Reference proteome</keyword>
<keyword id="KW-0808">Transferase</keyword>
<evidence type="ECO:0000255" key="1">
    <source>
        <dbReference type="HAMAP-Rule" id="MF_00328"/>
    </source>
</evidence>
<accession>Q6MDG3</accession>
<comment type="function">
    <text evidence="1">Essential for recycling GMP and indirectly, cGMP.</text>
</comment>
<comment type="catalytic activity">
    <reaction evidence="1">
        <text>GMP + ATP = GDP + ADP</text>
        <dbReference type="Rhea" id="RHEA:20780"/>
        <dbReference type="ChEBI" id="CHEBI:30616"/>
        <dbReference type="ChEBI" id="CHEBI:58115"/>
        <dbReference type="ChEBI" id="CHEBI:58189"/>
        <dbReference type="ChEBI" id="CHEBI:456216"/>
        <dbReference type="EC" id="2.7.4.8"/>
    </reaction>
</comment>
<comment type="subcellular location">
    <subcellularLocation>
        <location evidence="1">Cytoplasm</location>
    </subcellularLocation>
</comment>
<comment type="similarity">
    <text evidence="1">Belongs to the guanylate kinase family.</text>
</comment>
<proteinExistence type="inferred from homology"/>
<feature type="chain" id="PRO_0000170578" description="Guanylate kinase">
    <location>
        <begin position="1"/>
        <end position="197"/>
    </location>
</feature>
<feature type="domain" description="Guanylate kinase-like" evidence="1">
    <location>
        <begin position="10"/>
        <end position="187"/>
    </location>
</feature>
<feature type="binding site" evidence="1">
    <location>
        <begin position="17"/>
        <end position="24"/>
    </location>
    <ligand>
        <name>ATP</name>
        <dbReference type="ChEBI" id="CHEBI:30616"/>
    </ligand>
</feature>
<name>KGUA_PARUW</name>
<reference key="1">
    <citation type="journal article" date="2004" name="Science">
        <title>Illuminating the evolutionary history of chlamydiae.</title>
        <authorList>
            <person name="Horn M."/>
            <person name="Collingro A."/>
            <person name="Schmitz-Esser S."/>
            <person name="Beier C.L."/>
            <person name="Purkhold U."/>
            <person name="Fartmann B."/>
            <person name="Brandt P."/>
            <person name="Nyakatura G.J."/>
            <person name="Droege M."/>
            <person name="Frishman D."/>
            <person name="Rattei T."/>
            <person name="Mewes H.-W."/>
            <person name="Wagner M."/>
        </authorList>
    </citation>
    <scope>NUCLEOTIDE SEQUENCE [LARGE SCALE GENOMIC DNA]</scope>
    <source>
        <strain>UWE25</strain>
    </source>
</reference>